<name>ASTB_SHEPW</name>
<sequence length="445" mass="48910">MKHFEANFDGLVGPTHNYAGLSFGNVASLNNAAATSSPKDAAKQGIKKAKALADLGLVQGMFAPQERPDLHTLRRIGFTGSDAEVLNKAAKEAPALLRACCSASSMWTANAATVSPSADTHDGKLHFTPANLVDKLHRSIEPVTTGNILQATFNDSRYFKHHQHLPEHTSFGDEGAANHTRLCSEYGHAGIELFVYGQEATNPSAPKPQKFPARQTLEASQAIARLHQLDDDNTVYMQQNPDVIDQGVFHNDVIAVGNQNVLFYHEQAFLNTQAKLEEIKRKFGESPLHFVEVPTAKVAIQDAVKSYLFNTQVVTLPSGEMAIIAPTNCQENPAVHAYLNELVTLGSPIKQVHYFDVKQSMQNGGGPACLRLRVAMNQDEVAAVNQNTMMNDALFARLNQWVDKHYRDRLSVADLADPQLVIESRTALDELTQIMKLGSVYQFQR</sequence>
<feature type="chain" id="PRO_1000138029" description="N-succinylarginine dihydrolase">
    <location>
        <begin position="1"/>
        <end position="445"/>
    </location>
</feature>
<feature type="active site" evidence="1">
    <location>
        <position position="174"/>
    </location>
</feature>
<feature type="active site" evidence="1">
    <location>
        <position position="250"/>
    </location>
</feature>
<feature type="active site" description="Nucleophile" evidence="1">
    <location>
        <position position="369"/>
    </location>
</feature>
<feature type="binding site" evidence="1">
    <location>
        <begin position="19"/>
        <end position="28"/>
    </location>
    <ligand>
        <name>substrate</name>
    </ligand>
</feature>
<feature type="binding site" evidence="1">
    <location>
        <position position="110"/>
    </location>
    <ligand>
        <name>substrate</name>
    </ligand>
</feature>
<feature type="binding site" evidence="1">
    <location>
        <begin position="137"/>
        <end position="138"/>
    </location>
    <ligand>
        <name>substrate</name>
    </ligand>
</feature>
<feature type="binding site" evidence="1">
    <location>
        <position position="214"/>
    </location>
    <ligand>
        <name>substrate</name>
    </ligand>
</feature>
<feature type="binding site" evidence="1">
    <location>
        <position position="252"/>
    </location>
    <ligand>
        <name>substrate</name>
    </ligand>
</feature>
<feature type="binding site" evidence="1">
    <location>
        <position position="363"/>
    </location>
    <ligand>
        <name>substrate</name>
    </ligand>
</feature>
<keyword id="KW-0056">Arginine metabolism</keyword>
<keyword id="KW-0378">Hydrolase</keyword>
<accession>B8CN09</accession>
<protein>
    <recommendedName>
        <fullName evidence="1">N-succinylarginine dihydrolase</fullName>
        <ecNumber evidence="1">3.5.3.23</ecNumber>
    </recommendedName>
</protein>
<comment type="function">
    <text evidence="1">Catalyzes the hydrolysis of N(2)-succinylarginine into N(2)-succinylornithine, ammonia and CO(2).</text>
</comment>
<comment type="catalytic activity">
    <reaction evidence="1">
        <text>N(2)-succinyl-L-arginine + 2 H2O + 2 H(+) = N(2)-succinyl-L-ornithine + 2 NH4(+) + CO2</text>
        <dbReference type="Rhea" id="RHEA:19533"/>
        <dbReference type="ChEBI" id="CHEBI:15377"/>
        <dbReference type="ChEBI" id="CHEBI:15378"/>
        <dbReference type="ChEBI" id="CHEBI:16526"/>
        <dbReference type="ChEBI" id="CHEBI:28938"/>
        <dbReference type="ChEBI" id="CHEBI:58241"/>
        <dbReference type="ChEBI" id="CHEBI:58514"/>
        <dbReference type="EC" id="3.5.3.23"/>
    </reaction>
</comment>
<comment type="pathway">
    <text evidence="1">Amino-acid degradation; L-arginine degradation via AST pathway; L-glutamate and succinate from L-arginine: step 2/5.</text>
</comment>
<comment type="subunit">
    <text evidence="1">Homodimer.</text>
</comment>
<comment type="similarity">
    <text evidence="1">Belongs to the succinylarginine dihydrolase family.</text>
</comment>
<gene>
    <name evidence="1" type="primary">astB</name>
    <name type="ordered locus">swp_1743</name>
</gene>
<reference key="1">
    <citation type="journal article" date="2008" name="PLoS ONE">
        <title>Environmental adaptation: genomic analysis of the piezotolerant and psychrotolerant deep-sea iron reducing bacterium Shewanella piezotolerans WP3.</title>
        <authorList>
            <person name="Wang F."/>
            <person name="Wang J."/>
            <person name="Jian H."/>
            <person name="Zhang B."/>
            <person name="Li S."/>
            <person name="Wang F."/>
            <person name="Zeng X."/>
            <person name="Gao L."/>
            <person name="Bartlett D.H."/>
            <person name="Yu J."/>
            <person name="Hu S."/>
            <person name="Xiao X."/>
        </authorList>
    </citation>
    <scope>NUCLEOTIDE SEQUENCE [LARGE SCALE GENOMIC DNA]</scope>
    <source>
        <strain>WP3 / JCM 13877</strain>
    </source>
</reference>
<dbReference type="EC" id="3.5.3.23" evidence="1"/>
<dbReference type="EMBL" id="CP000472">
    <property type="protein sequence ID" value="ACJ28512.1"/>
    <property type="molecule type" value="Genomic_DNA"/>
</dbReference>
<dbReference type="RefSeq" id="WP_020911889.1">
    <property type="nucleotide sequence ID" value="NC_011566.1"/>
</dbReference>
<dbReference type="SMR" id="B8CN09"/>
<dbReference type="STRING" id="225849.swp_1743"/>
<dbReference type="KEGG" id="swp:swp_1743"/>
<dbReference type="eggNOG" id="COG3724">
    <property type="taxonomic scope" value="Bacteria"/>
</dbReference>
<dbReference type="HOGENOM" id="CLU_053835_0_0_6"/>
<dbReference type="OrthoDB" id="248552at2"/>
<dbReference type="UniPathway" id="UPA00185">
    <property type="reaction ID" value="UER00280"/>
</dbReference>
<dbReference type="Proteomes" id="UP000000753">
    <property type="component" value="Chromosome"/>
</dbReference>
<dbReference type="GO" id="GO:0009015">
    <property type="term" value="F:N-succinylarginine dihydrolase activity"/>
    <property type="evidence" value="ECO:0007669"/>
    <property type="project" value="UniProtKB-UniRule"/>
</dbReference>
<dbReference type="GO" id="GO:0019544">
    <property type="term" value="P:arginine catabolic process to glutamate"/>
    <property type="evidence" value="ECO:0007669"/>
    <property type="project" value="UniProtKB-UniRule"/>
</dbReference>
<dbReference type="GO" id="GO:0019545">
    <property type="term" value="P:arginine catabolic process to succinate"/>
    <property type="evidence" value="ECO:0007669"/>
    <property type="project" value="UniProtKB-UniRule"/>
</dbReference>
<dbReference type="Gene3D" id="3.75.10.20">
    <property type="entry name" value="Succinylarginine dihydrolase"/>
    <property type="match status" value="1"/>
</dbReference>
<dbReference type="HAMAP" id="MF_01172">
    <property type="entry name" value="AstB"/>
    <property type="match status" value="1"/>
</dbReference>
<dbReference type="InterPro" id="IPR037031">
    <property type="entry name" value="AstB_sf"/>
</dbReference>
<dbReference type="InterPro" id="IPR007079">
    <property type="entry name" value="SuccinylArg_d-Hdrlase_AstB"/>
</dbReference>
<dbReference type="NCBIfam" id="TIGR03241">
    <property type="entry name" value="arg_catab_astB"/>
    <property type="match status" value="1"/>
</dbReference>
<dbReference type="NCBIfam" id="NF009789">
    <property type="entry name" value="PRK13281.1"/>
    <property type="match status" value="1"/>
</dbReference>
<dbReference type="PANTHER" id="PTHR30420">
    <property type="entry name" value="N-SUCCINYLARGININE DIHYDROLASE"/>
    <property type="match status" value="1"/>
</dbReference>
<dbReference type="PANTHER" id="PTHR30420:SF2">
    <property type="entry name" value="N-SUCCINYLARGININE DIHYDROLASE"/>
    <property type="match status" value="1"/>
</dbReference>
<dbReference type="Pfam" id="PF04996">
    <property type="entry name" value="AstB"/>
    <property type="match status" value="1"/>
</dbReference>
<dbReference type="SUPFAM" id="SSF55909">
    <property type="entry name" value="Pentein"/>
    <property type="match status" value="1"/>
</dbReference>
<evidence type="ECO:0000255" key="1">
    <source>
        <dbReference type="HAMAP-Rule" id="MF_01172"/>
    </source>
</evidence>
<organism>
    <name type="scientific">Shewanella piezotolerans (strain WP3 / JCM 13877)</name>
    <dbReference type="NCBI Taxonomy" id="225849"/>
    <lineage>
        <taxon>Bacteria</taxon>
        <taxon>Pseudomonadati</taxon>
        <taxon>Pseudomonadota</taxon>
        <taxon>Gammaproteobacteria</taxon>
        <taxon>Alteromonadales</taxon>
        <taxon>Shewanellaceae</taxon>
        <taxon>Shewanella</taxon>
    </lineage>
</organism>
<proteinExistence type="inferred from homology"/>